<sequence length="614" mass="68401">MIKKASLLTACSVTAFSAWAQDTSPDTLVVTANRFEQPRSTVLAPTTVVTRQDIDRWQSTSVNDVLRRLPGVDITQNGGSGQLSSIFIRGTNASHVLVLIDGVRLNLAGVSGSADLSQFPIALVQRVEYIRGPRSAVYGSDAIGGVVNIITTRDHPGTEISAGWGSNSYQNYDVSTQQQLGDKTRVTLLGDYAHTHGYDVVAYGNTGTQAQPDNDGFLSKTLYGALEHNFTDVWSGFVRGYGYDNRTNYDAYYSPGLPLVDTRKLYSQSWDAGLRYNGELIKSQLITSYSHSKDYNYDPHYGRYDSSATLDEMKQYTVQWANNIIIGHGNIGAGVDWQKQSTAPGTAYVEDGYDQRNTGIYLTGLQQVGDFTFEGAGRSDDNSQFGRHGTWQTSAGWEFIEGYRFIASYGTSYKAPNLGQLYGSYGNPNLNPEKSKQWEGAFEGLTAGVNWRISGYRNDVSDLIDYDDHTLKYYNEGKARIKGVEATANFDTGPLTHTVSYDYVDARNAITDTPLLRRAKQQVKYQLDWQLYDFDWGITYQYLGTRYDKDYSSYPYQTVKMGGVSLWDLAVAYPVTSHLTVRGKIANLFDKDYETVYGYQTAGREYTLSGSYTF</sequence>
<keyword id="KW-0106">Calcium</keyword>
<keyword id="KW-0998">Cell outer membrane</keyword>
<keyword id="KW-0406">Ion transport</keyword>
<keyword id="KW-0472">Membrane</keyword>
<keyword id="KW-0479">Metal-binding</keyword>
<keyword id="KW-0626">Porin</keyword>
<keyword id="KW-0732">Signal</keyword>
<keyword id="KW-0798">TonB box</keyword>
<keyword id="KW-0812">Transmembrane</keyword>
<keyword id="KW-1134">Transmembrane beta strand</keyword>
<keyword id="KW-0813">Transport</keyword>
<evidence type="ECO:0000255" key="1">
    <source>
        <dbReference type="HAMAP-Rule" id="MF_01531"/>
    </source>
</evidence>
<evidence type="ECO:0000255" key="2">
    <source>
        <dbReference type="PROSITE-ProRule" id="PRU01360"/>
    </source>
</evidence>
<evidence type="ECO:0000305" key="3"/>
<organism>
    <name type="scientific">Escherichia coli O6:K15:H31 (strain 536 / UPEC)</name>
    <dbReference type="NCBI Taxonomy" id="362663"/>
    <lineage>
        <taxon>Bacteria</taxon>
        <taxon>Pseudomonadati</taxon>
        <taxon>Pseudomonadota</taxon>
        <taxon>Gammaproteobacteria</taxon>
        <taxon>Enterobacterales</taxon>
        <taxon>Enterobacteriaceae</taxon>
        <taxon>Escherichia</taxon>
    </lineage>
</organism>
<reference key="1">
    <citation type="journal article" date="2006" name="Mol. Microbiol.">
        <title>Role of pathogenicity island-associated integrases in the genome plasticity of uropathogenic Escherichia coli strain 536.</title>
        <authorList>
            <person name="Hochhut B."/>
            <person name="Wilde C."/>
            <person name="Balling G."/>
            <person name="Middendorf B."/>
            <person name="Dobrindt U."/>
            <person name="Brzuszkiewicz E."/>
            <person name="Gottschalk G."/>
            <person name="Carniel E."/>
            <person name="Hacker J."/>
        </authorList>
    </citation>
    <scope>NUCLEOTIDE SEQUENCE [LARGE SCALE GENOMIC DNA]</scope>
    <source>
        <strain>536 / UPEC</strain>
    </source>
</reference>
<protein>
    <recommendedName>
        <fullName evidence="1">Vitamin B12 transporter BtuB</fullName>
    </recommendedName>
    <alternativeName>
        <fullName evidence="1">Cobalamin receptor</fullName>
    </alternativeName>
    <alternativeName>
        <fullName evidence="1">Outer membrane cobalamin translocator</fullName>
    </alternativeName>
</protein>
<feature type="signal peptide" evidence="1">
    <location>
        <begin position="1"/>
        <end position="20"/>
    </location>
</feature>
<feature type="chain" id="PRO_0000292759" description="Vitamin B12 transporter BtuB">
    <location>
        <begin position="21"/>
        <end position="614"/>
    </location>
</feature>
<feature type="transmembrane region" description="Beta stranded" evidence="1">
    <location>
        <begin position="158"/>
        <end position="165"/>
    </location>
</feature>
<feature type="transmembrane region" description="Beta stranded" evidence="1">
    <location>
        <begin position="169"/>
        <end position="178"/>
    </location>
</feature>
<feature type="transmembrane region" description="Beta stranded" evidence="1">
    <location>
        <begin position="184"/>
        <end position="195"/>
    </location>
</feature>
<feature type="transmembrane region" description="Beta stranded" evidence="1">
    <location>
        <begin position="217"/>
        <end position="227"/>
    </location>
</feature>
<feature type="transmembrane region" description="Beta stranded" evidence="1">
    <location>
        <begin position="232"/>
        <end position="248"/>
    </location>
</feature>
<feature type="transmembrane region" description="Beta stranded" evidence="1">
    <location>
        <begin position="263"/>
        <end position="277"/>
    </location>
</feature>
<feature type="transmembrane region" description="Beta stranded" evidence="1">
    <location>
        <begin position="279"/>
        <end position="296"/>
    </location>
</feature>
<feature type="transmembrane region" description="Beta stranded" evidence="1">
    <location>
        <begin position="309"/>
        <end position="325"/>
    </location>
</feature>
<feature type="transmembrane region" description="Beta stranded" evidence="1">
    <location>
        <begin position="328"/>
        <end position="337"/>
    </location>
</feature>
<feature type="transmembrane region" description="Beta stranded" evidence="1">
    <location>
        <begin position="353"/>
        <end position="369"/>
    </location>
</feature>
<feature type="transmembrane region" description="Beta stranded" evidence="1">
    <location>
        <begin position="371"/>
        <end position="381"/>
    </location>
</feature>
<feature type="transmembrane region" description="Beta stranded" evidence="1">
    <location>
        <begin position="385"/>
        <end position="400"/>
    </location>
</feature>
<feature type="transmembrane region" description="Beta stranded" evidence="1">
    <location>
        <begin position="403"/>
        <end position="417"/>
    </location>
</feature>
<feature type="transmembrane region" description="Beta stranded" evidence="1">
    <location>
        <begin position="434"/>
        <end position="443"/>
    </location>
</feature>
<feature type="transmembrane region" description="Beta stranded" evidence="1">
    <location>
        <begin position="449"/>
        <end position="458"/>
    </location>
</feature>
<feature type="transmembrane region" description="Beta stranded" evidence="1">
    <location>
        <begin position="473"/>
        <end position="490"/>
    </location>
</feature>
<feature type="transmembrane region" description="Beta stranded" evidence="1">
    <location>
        <begin position="494"/>
        <end position="509"/>
    </location>
</feature>
<feature type="transmembrane region" description="Beta stranded" evidence="1">
    <location>
        <begin position="517"/>
        <end position="529"/>
    </location>
</feature>
<feature type="transmembrane region" description="Beta stranded" evidence="1">
    <location>
        <begin position="535"/>
        <end position="550"/>
    </location>
</feature>
<feature type="transmembrane region" description="Beta stranded" evidence="1">
    <location>
        <begin position="558"/>
        <end position="572"/>
    </location>
</feature>
<feature type="transmembrane region" description="Beta stranded" evidence="1">
    <location>
        <begin position="585"/>
        <end position="596"/>
    </location>
</feature>
<feature type="transmembrane region" description="Beta stranded" evidence="1">
    <location>
        <begin position="602"/>
        <end position="614"/>
    </location>
</feature>
<feature type="domain" description="TBDR plug" evidence="2">
    <location>
        <begin position="38"/>
        <end position="152"/>
    </location>
</feature>
<feature type="domain" description="TBDR beta-barrel" evidence="2">
    <location>
        <begin position="155"/>
        <end position="614"/>
    </location>
</feature>
<feature type="short sequence motif" description="TonB box">
    <location>
        <begin position="26"/>
        <end position="33"/>
    </location>
</feature>
<feature type="short sequence motif" description="TonB C-terminal box">
    <location>
        <begin position="597"/>
        <end position="614"/>
    </location>
</feature>
<feature type="binding site" evidence="1">
    <location>
        <position position="83"/>
    </location>
    <ligand>
        <name>cyanocob(III)alamin</name>
        <dbReference type="ChEBI" id="CHEBI:17439"/>
    </ligand>
</feature>
<feature type="binding site" evidence="1">
    <location>
        <position position="85"/>
    </location>
    <ligand>
        <name>cyanocob(III)alamin</name>
        <dbReference type="ChEBI" id="CHEBI:17439"/>
    </ligand>
</feature>
<feature type="binding site" evidence="1">
    <location>
        <position position="92"/>
    </location>
    <ligand>
        <name>cyanocob(III)alamin</name>
        <dbReference type="ChEBI" id="CHEBI:17439"/>
    </ligand>
</feature>
<feature type="binding site" evidence="1">
    <location>
        <begin position="110"/>
        <end position="111"/>
    </location>
    <ligand>
        <name>cyanocob(III)alamin</name>
        <dbReference type="ChEBI" id="CHEBI:17439"/>
    </ligand>
</feature>
<feature type="binding site" evidence="1">
    <location>
        <position position="199"/>
    </location>
    <ligand>
        <name>Ca(2+)</name>
        <dbReference type="ChEBI" id="CHEBI:29108"/>
        <label>1</label>
    </ligand>
</feature>
<feature type="binding site" evidence="1">
    <location>
        <position position="211"/>
    </location>
    <ligand>
        <name>Ca(2+)</name>
        <dbReference type="ChEBI" id="CHEBI:29108"/>
        <label>1</label>
    </ligand>
</feature>
<feature type="binding site" evidence="1">
    <location>
        <position position="213"/>
    </location>
    <ligand>
        <name>Ca(2+)</name>
        <dbReference type="ChEBI" id="CHEBI:29108"/>
        <label>1</label>
    </ligand>
</feature>
<feature type="binding site" evidence="1">
    <location>
        <position position="213"/>
    </location>
    <ligand>
        <name>Ca(2+)</name>
        <dbReference type="ChEBI" id="CHEBI:29108"/>
        <label>2</label>
    </ligand>
</feature>
<feature type="binding site" evidence="1">
    <location>
        <position position="215"/>
    </location>
    <ligand>
        <name>Ca(2+)</name>
        <dbReference type="ChEBI" id="CHEBI:29108"/>
        <label>1</label>
    </ligand>
</feature>
<feature type="binding site" evidence="1">
    <location>
        <position position="215"/>
    </location>
    <ligand>
        <name>Ca(2+)</name>
        <dbReference type="ChEBI" id="CHEBI:29108"/>
        <label>2</label>
    </ligand>
</feature>
<feature type="binding site" evidence="1">
    <location>
        <position position="249"/>
    </location>
    <ligand>
        <name>Ca(2+)</name>
        <dbReference type="ChEBI" id="CHEBI:29108"/>
        <label>2</label>
    </ligand>
</feature>
<feature type="binding site" evidence="1">
    <location>
        <position position="250"/>
    </location>
    <ligand>
        <name>Ca(2+)</name>
        <dbReference type="ChEBI" id="CHEBI:29108"/>
        <label>1</label>
    </ligand>
</feature>
<feature type="binding site" evidence="1">
    <location>
        <position position="250"/>
    </location>
    <ligand>
        <name>Ca(2+)</name>
        <dbReference type="ChEBI" id="CHEBI:29108"/>
        <label>2</label>
    </ligand>
</feature>
<feature type="binding site" evidence="1">
    <location>
        <position position="251"/>
    </location>
    <ligand>
        <name>cyanocob(III)alamin</name>
        <dbReference type="ChEBI" id="CHEBI:17439"/>
    </ligand>
</feature>
<feature type="binding site" evidence="1">
    <location>
        <position position="261"/>
    </location>
    <ligand>
        <name>Ca(2+)</name>
        <dbReference type="ChEBI" id="CHEBI:29108"/>
        <label>2</label>
    </ligand>
</feature>
<feature type="binding site" evidence="1">
    <location>
        <position position="309"/>
    </location>
    <ligand>
        <name>cyanocob(III)alamin</name>
        <dbReference type="ChEBI" id="CHEBI:17439"/>
    </ligand>
</feature>
<feature type="binding site" evidence="1">
    <location>
        <position position="517"/>
    </location>
    <ligand>
        <name>cyanocob(III)alamin</name>
        <dbReference type="ChEBI" id="CHEBI:17439"/>
    </ligand>
</feature>
<feature type="binding site" evidence="1">
    <location>
        <position position="551"/>
    </location>
    <ligand>
        <name>cyanocob(III)alamin</name>
        <dbReference type="ChEBI" id="CHEBI:17439"/>
    </ligand>
</feature>
<accession>Q0TA90</accession>
<gene>
    <name evidence="1" type="primary">btuB</name>
    <name type="ordered locus">ECP_4183</name>
</gene>
<comment type="function">
    <text evidence="1">Involved in the active translocation of vitamin B12 (cyanocobalamin) across the outer membrane to the periplasmic space. It derives its energy for transport by interacting with the trans-periplasmic membrane protein TonB.</text>
</comment>
<comment type="subcellular location">
    <subcellularLocation>
        <location evidence="1">Cell outer membrane</location>
        <topology evidence="1">Multi-pass membrane protein</topology>
    </subcellularLocation>
</comment>
<comment type="similarity">
    <text evidence="1">Belongs to the TonB-dependent receptor family. BtuB (TC 1.B.14.3.1) subfamily.</text>
</comment>
<comment type="sequence caution" evidence="3">
    <conflict type="erroneous initiation">
        <sequence resource="EMBL-CDS" id="ABG72139"/>
    </conflict>
</comment>
<proteinExistence type="inferred from homology"/>
<name>BTUB_ECOL5</name>
<dbReference type="EMBL" id="CP000247">
    <property type="protein sequence ID" value="ABG72139.1"/>
    <property type="status" value="ALT_INIT"/>
    <property type="molecule type" value="Genomic_DNA"/>
</dbReference>
<dbReference type="RefSeq" id="WP_000591378.1">
    <property type="nucleotide sequence ID" value="NC_008253.1"/>
</dbReference>
<dbReference type="SMR" id="Q0TA90"/>
<dbReference type="KEGG" id="ecp:ECP_4183"/>
<dbReference type="HOGENOM" id="CLU_008287_18_5_6"/>
<dbReference type="Proteomes" id="UP000009182">
    <property type="component" value="Chromosome"/>
</dbReference>
<dbReference type="GO" id="GO:0009279">
    <property type="term" value="C:cell outer membrane"/>
    <property type="evidence" value="ECO:0007669"/>
    <property type="project" value="UniProtKB-SubCell"/>
</dbReference>
<dbReference type="GO" id="GO:0046930">
    <property type="term" value="C:pore complex"/>
    <property type="evidence" value="ECO:0007669"/>
    <property type="project" value="UniProtKB-KW"/>
</dbReference>
<dbReference type="GO" id="GO:0015420">
    <property type="term" value="F:ABC-type vitamin B12 transporter activity"/>
    <property type="evidence" value="ECO:0007669"/>
    <property type="project" value="InterPro"/>
</dbReference>
<dbReference type="GO" id="GO:0046872">
    <property type="term" value="F:metal ion binding"/>
    <property type="evidence" value="ECO:0007669"/>
    <property type="project" value="UniProtKB-KW"/>
</dbReference>
<dbReference type="GO" id="GO:0015288">
    <property type="term" value="F:porin activity"/>
    <property type="evidence" value="ECO:0007669"/>
    <property type="project" value="UniProtKB-KW"/>
</dbReference>
<dbReference type="GO" id="GO:0006811">
    <property type="term" value="P:monoatomic ion transport"/>
    <property type="evidence" value="ECO:0007669"/>
    <property type="project" value="UniProtKB-KW"/>
</dbReference>
<dbReference type="CDD" id="cd01347">
    <property type="entry name" value="ligand_gated_channel"/>
    <property type="match status" value="1"/>
</dbReference>
<dbReference type="FunFam" id="2.170.130.10:FF:000002">
    <property type="entry name" value="Vitamin B12 transporter BtuB"/>
    <property type="match status" value="1"/>
</dbReference>
<dbReference type="FunFam" id="2.40.170.20:FF:000001">
    <property type="entry name" value="Vitamin B12 transporter BtuB"/>
    <property type="match status" value="1"/>
</dbReference>
<dbReference type="Gene3D" id="2.40.170.20">
    <property type="entry name" value="TonB-dependent receptor, beta-barrel domain"/>
    <property type="match status" value="1"/>
</dbReference>
<dbReference type="Gene3D" id="2.170.130.10">
    <property type="entry name" value="TonB-dependent receptor, plug domain"/>
    <property type="match status" value="1"/>
</dbReference>
<dbReference type="HAMAP" id="MF_01531">
    <property type="entry name" value="BtuB"/>
    <property type="match status" value="1"/>
</dbReference>
<dbReference type="InterPro" id="IPR010101">
    <property type="entry name" value="B12_transptr_BtuB"/>
</dbReference>
<dbReference type="InterPro" id="IPR012910">
    <property type="entry name" value="Plug_dom"/>
</dbReference>
<dbReference type="InterPro" id="IPR037066">
    <property type="entry name" value="Plug_dom_sf"/>
</dbReference>
<dbReference type="InterPro" id="IPR039426">
    <property type="entry name" value="TonB-dep_rcpt-like"/>
</dbReference>
<dbReference type="InterPro" id="IPR000531">
    <property type="entry name" value="TonB-dep_rcpt_b-brl"/>
</dbReference>
<dbReference type="InterPro" id="IPR010916">
    <property type="entry name" value="TonB_box_CS"/>
</dbReference>
<dbReference type="InterPro" id="IPR036942">
    <property type="entry name" value="TonB_rcpt_b-brl_sf"/>
</dbReference>
<dbReference type="InterPro" id="IPR010917">
    <property type="entry name" value="TonB_rcpt_CS"/>
</dbReference>
<dbReference type="NCBIfam" id="NF007926">
    <property type="entry name" value="PRK10641.1"/>
    <property type="match status" value="1"/>
</dbReference>
<dbReference type="NCBIfam" id="TIGR01779">
    <property type="entry name" value="TonB-B12"/>
    <property type="match status" value="1"/>
</dbReference>
<dbReference type="PANTHER" id="PTHR30069:SF53">
    <property type="entry name" value="COLICIN I RECEPTOR-RELATED"/>
    <property type="match status" value="1"/>
</dbReference>
<dbReference type="PANTHER" id="PTHR30069">
    <property type="entry name" value="TONB-DEPENDENT OUTER MEMBRANE RECEPTOR"/>
    <property type="match status" value="1"/>
</dbReference>
<dbReference type="Pfam" id="PF07715">
    <property type="entry name" value="Plug"/>
    <property type="match status" value="1"/>
</dbReference>
<dbReference type="Pfam" id="PF00593">
    <property type="entry name" value="TonB_dep_Rec_b-barrel"/>
    <property type="match status" value="1"/>
</dbReference>
<dbReference type="SUPFAM" id="SSF56935">
    <property type="entry name" value="Porins"/>
    <property type="match status" value="1"/>
</dbReference>
<dbReference type="PROSITE" id="PS00430">
    <property type="entry name" value="TONB_DEPENDENT_REC_1"/>
    <property type="match status" value="1"/>
</dbReference>
<dbReference type="PROSITE" id="PS01156">
    <property type="entry name" value="TONB_DEPENDENT_REC_2"/>
    <property type="match status" value="1"/>
</dbReference>
<dbReference type="PROSITE" id="PS52016">
    <property type="entry name" value="TONB_DEPENDENT_REC_3"/>
    <property type="match status" value="1"/>
</dbReference>